<gene>
    <name evidence="1" type="primary">folD</name>
    <name type="ordered locus">SeSA_A0587</name>
</gene>
<protein>
    <recommendedName>
        <fullName evidence="1">Bifunctional protein FolD</fullName>
    </recommendedName>
    <domain>
        <recommendedName>
            <fullName evidence="1">Methylenetetrahydrofolate dehydrogenase</fullName>
            <ecNumber evidence="1">1.5.1.5</ecNumber>
        </recommendedName>
    </domain>
    <domain>
        <recommendedName>
            <fullName evidence="1">Methenyltetrahydrofolate cyclohydrolase</fullName>
            <ecNumber evidence="1">3.5.4.9</ecNumber>
        </recommendedName>
    </domain>
</protein>
<name>FOLD_SALSV</name>
<keyword id="KW-0028">Amino-acid biosynthesis</keyword>
<keyword id="KW-0368">Histidine biosynthesis</keyword>
<keyword id="KW-0378">Hydrolase</keyword>
<keyword id="KW-0486">Methionine biosynthesis</keyword>
<keyword id="KW-0511">Multifunctional enzyme</keyword>
<keyword id="KW-0521">NADP</keyword>
<keyword id="KW-0554">One-carbon metabolism</keyword>
<keyword id="KW-0560">Oxidoreductase</keyword>
<keyword id="KW-0658">Purine biosynthesis</keyword>
<evidence type="ECO:0000255" key="1">
    <source>
        <dbReference type="HAMAP-Rule" id="MF_01576"/>
    </source>
</evidence>
<dbReference type="EC" id="1.5.1.5" evidence="1"/>
<dbReference type="EC" id="3.5.4.9" evidence="1"/>
<dbReference type="EMBL" id="CP001127">
    <property type="protein sequence ID" value="ACF92301.1"/>
    <property type="molecule type" value="Genomic_DNA"/>
</dbReference>
<dbReference type="RefSeq" id="WP_000729165.1">
    <property type="nucleotide sequence ID" value="NC_011094.1"/>
</dbReference>
<dbReference type="SMR" id="B4TN64"/>
<dbReference type="KEGG" id="sew:SeSA_A0587"/>
<dbReference type="HOGENOM" id="CLU_034045_2_1_6"/>
<dbReference type="UniPathway" id="UPA00193"/>
<dbReference type="Proteomes" id="UP000001865">
    <property type="component" value="Chromosome"/>
</dbReference>
<dbReference type="GO" id="GO:0005829">
    <property type="term" value="C:cytosol"/>
    <property type="evidence" value="ECO:0007669"/>
    <property type="project" value="TreeGrafter"/>
</dbReference>
<dbReference type="GO" id="GO:0004477">
    <property type="term" value="F:methenyltetrahydrofolate cyclohydrolase activity"/>
    <property type="evidence" value="ECO:0007669"/>
    <property type="project" value="UniProtKB-UniRule"/>
</dbReference>
<dbReference type="GO" id="GO:0004488">
    <property type="term" value="F:methylenetetrahydrofolate dehydrogenase (NADP+) activity"/>
    <property type="evidence" value="ECO:0007669"/>
    <property type="project" value="UniProtKB-UniRule"/>
</dbReference>
<dbReference type="GO" id="GO:0000105">
    <property type="term" value="P:L-histidine biosynthetic process"/>
    <property type="evidence" value="ECO:0007669"/>
    <property type="project" value="UniProtKB-KW"/>
</dbReference>
<dbReference type="GO" id="GO:0009086">
    <property type="term" value="P:methionine biosynthetic process"/>
    <property type="evidence" value="ECO:0007669"/>
    <property type="project" value="UniProtKB-KW"/>
</dbReference>
<dbReference type="GO" id="GO:0006164">
    <property type="term" value="P:purine nucleotide biosynthetic process"/>
    <property type="evidence" value="ECO:0007669"/>
    <property type="project" value="UniProtKB-KW"/>
</dbReference>
<dbReference type="GO" id="GO:0035999">
    <property type="term" value="P:tetrahydrofolate interconversion"/>
    <property type="evidence" value="ECO:0007669"/>
    <property type="project" value="UniProtKB-UniRule"/>
</dbReference>
<dbReference type="CDD" id="cd01080">
    <property type="entry name" value="NAD_bind_m-THF_DH_Cyclohyd"/>
    <property type="match status" value="1"/>
</dbReference>
<dbReference type="FunFam" id="3.40.50.10860:FF:000001">
    <property type="entry name" value="Bifunctional protein FolD"/>
    <property type="match status" value="1"/>
</dbReference>
<dbReference type="FunFam" id="3.40.50.720:FF:000006">
    <property type="entry name" value="Bifunctional protein FolD"/>
    <property type="match status" value="1"/>
</dbReference>
<dbReference type="Gene3D" id="3.40.50.10860">
    <property type="entry name" value="Leucine Dehydrogenase, chain A, domain 1"/>
    <property type="match status" value="1"/>
</dbReference>
<dbReference type="Gene3D" id="3.40.50.720">
    <property type="entry name" value="NAD(P)-binding Rossmann-like Domain"/>
    <property type="match status" value="1"/>
</dbReference>
<dbReference type="HAMAP" id="MF_01576">
    <property type="entry name" value="THF_DHG_CYH"/>
    <property type="match status" value="1"/>
</dbReference>
<dbReference type="InterPro" id="IPR046346">
    <property type="entry name" value="Aminoacid_DH-like_N_sf"/>
</dbReference>
<dbReference type="InterPro" id="IPR036291">
    <property type="entry name" value="NAD(P)-bd_dom_sf"/>
</dbReference>
<dbReference type="InterPro" id="IPR000672">
    <property type="entry name" value="THF_DH/CycHdrlase"/>
</dbReference>
<dbReference type="InterPro" id="IPR020630">
    <property type="entry name" value="THF_DH/CycHdrlase_cat_dom"/>
</dbReference>
<dbReference type="InterPro" id="IPR020867">
    <property type="entry name" value="THF_DH/CycHdrlase_CS"/>
</dbReference>
<dbReference type="InterPro" id="IPR020631">
    <property type="entry name" value="THF_DH/CycHdrlase_NAD-bd_dom"/>
</dbReference>
<dbReference type="NCBIfam" id="NF008058">
    <property type="entry name" value="PRK10792.1"/>
    <property type="match status" value="1"/>
</dbReference>
<dbReference type="NCBIfam" id="NF010783">
    <property type="entry name" value="PRK14186.1"/>
    <property type="match status" value="1"/>
</dbReference>
<dbReference type="PANTHER" id="PTHR48099:SF5">
    <property type="entry name" value="C-1-TETRAHYDROFOLATE SYNTHASE, CYTOPLASMIC"/>
    <property type="match status" value="1"/>
</dbReference>
<dbReference type="PANTHER" id="PTHR48099">
    <property type="entry name" value="C-1-TETRAHYDROFOLATE SYNTHASE, CYTOPLASMIC-RELATED"/>
    <property type="match status" value="1"/>
</dbReference>
<dbReference type="Pfam" id="PF00763">
    <property type="entry name" value="THF_DHG_CYH"/>
    <property type="match status" value="1"/>
</dbReference>
<dbReference type="Pfam" id="PF02882">
    <property type="entry name" value="THF_DHG_CYH_C"/>
    <property type="match status" value="1"/>
</dbReference>
<dbReference type="PRINTS" id="PR00085">
    <property type="entry name" value="THFDHDRGNASE"/>
</dbReference>
<dbReference type="SUPFAM" id="SSF53223">
    <property type="entry name" value="Aminoacid dehydrogenase-like, N-terminal domain"/>
    <property type="match status" value="1"/>
</dbReference>
<dbReference type="SUPFAM" id="SSF51735">
    <property type="entry name" value="NAD(P)-binding Rossmann-fold domains"/>
    <property type="match status" value="1"/>
</dbReference>
<dbReference type="PROSITE" id="PS00766">
    <property type="entry name" value="THF_DHG_CYH_1"/>
    <property type="match status" value="1"/>
</dbReference>
<dbReference type="PROSITE" id="PS00767">
    <property type="entry name" value="THF_DHG_CYH_2"/>
    <property type="match status" value="1"/>
</dbReference>
<organism>
    <name type="scientific">Salmonella schwarzengrund (strain CVM19633)</name>
    <dbReference type="NCBI Taxonomy" id="439843"/>
    <lineage>
        <taxon>Bacteria</taxon>
        <taxon>Pseudomonadati</taxon>
        <taxon>Pseudomonadota</taxon>
        <taxon>Gammaproteobacteria</taxon>
        <taxon>Enterobacterales</taxon>
        <taxon>Enterobacteriaceae</taxon>
        <taxon>Salmonella</taxon>
    </lineage>
</organism>
<comment type="function">
    <text evidence="1">Catalyzes the oxidation of 5,10-methylenetetrahydrofolate to 5,10-methenyltetrahydrofolate and then the hydrolysis of 5,10-methenyltetrahydrofolate to 10-formyltetrahydrofolate.</text>
</comment>
<comment type="catalytic activity">
    <reaction evidence="1">
        <text>(6R)-5,10-methylene-5,6,7,8-tetrahydrofolate + NADP(+) = (6R)-5,10-methenyltetrahydrofolate + NADPH</text>
        <dbReference type="Rhea" id="RHEA:22812"/>
        <dbReference type="ChEBI" id="CHEBI:15636"/>
        <dbReference type="ChEBI" id="CHEBI:57455"/>
        <dbReference type="ChEBI" id="CHEBI:57783"/>
        <dbReference type="ChEBI" id="CHEBI:58349"/>
        <dbReference type="EC" id="1.5.1.5"/>
    </reaction>
</comment>
<comment type="catalytic activity">
    <reaction evidence="1">
        <text>(6R)-5,10-methenyltetrahydrofolate + H2O = (6R)-10-formyltetrahydrofolate + H(+)</text>
        <dbReference type="Rhea" id="RHEA:23700"/>
        <dbReference type="ChEBI" id="CHEBI:15377"/>
        <dbReference type="ChEBI" id="CHEBI:15378"/>
        <dbReference type="ChEBI" id="CHEBI:57455"/>
        <dbReference type="ChEBI" id="CHEBI:195366"/>
        <dbReference type="EC" id="3.5.4.9"/>
    </reaction>
</comment>
<comment type="pathway">
    <text evidence="1">One-carbon metabolism; tetrahydrofolate interconversion.</text>
</comment>
<comment type="subunit">
    <text evidence="1">Homodimer.</text>
</comment>
<comment type="similarity">
    <text evidence="1">Belongs to the tetrahydrofolate dehydrogenase/cyclohydrolase family.</text>
</comment>
<reference key="1">
    <citation type="journal article" date="2011" name="J. Bacteriol.">
        <title>Comparative genomics of 28 Salmonella enterica isolates: evidence for CRISPR-mediated adaptive sublineage evolution.</title>
        <authorList>
            <person name="Fricke W.F."/>
            <person name="Mammel M.K."/>
            <person name="McDermott P.F."/>
            <person name="Tartera C."/>
            <person name="White D.G."/>
            <person name="Leclerc J.E."/>
            <person name="Ravel J."/>
            <person name="Cebula T.A."/>
        </authorList>
    </citation>
    <scope>NUCLEOTIDE SEQUENCE [LARGE SCALE GENOMIC DNA]</scope>
    <source>
        <strain>CVM19633</strain>
    </source>
</reference>
<proteinExistence type="inferred from homology"/>
<sequence length="288" mass="30844">MAAKIIDGKTIAQQVRSEVAQKVQARVAAGLRAPGLAVVLVGSNPASQIYVASKRKACDEVGFVSRSYDLPETTSEAELLALIDTLNADNTIDGILVQLPLPAGIDNVKVLERIAPDKDVDGFHPYNVGRLCQRAPRLRPCTPRGIVTLLERYNIDTYGLNAVVIGASNIVGRPMSMELLLAGCTTTVTHRFTKDLRHHVEHADLLIVAVGKPGFIPGEWIKEGAIVIDVGINRLENGKVVGDVVFDEAAARASYITPVPGGVGPMTVATLIENTLQACIEYHDPQGK</sequence>
<feature type="chain" id="PRO_1000196802" description="Bifunctional protein FolD">
    <location>
        <begin position="1"/>
        <end position="288"/>
    </location>
</feature>
<feature type="binding site" evidence="1">
    <location>
        <begin position="166"/>
        <end position="168"/>
    </location>
    <ligand>
        <name>NADP(+)</name>
        <dbReference type="ChEBI" id="CHEBI:58349"/>
    </ligand>
</feature>
<feature type="binding site" evidence="1">
    <location>
        <position position="232"/>
    </location>
    <ligand>
        <name>NADP(+)</name>
        <dbReference type="ChEBI" id="CHEBI:58349"/>
    </ligand>
</feature>
<accession>B4TN64</accession>